<proteinExistence type="evidence at protein level"/>
<reference key="1">
    <citation type="journal article" date="2005" name="Science">
        <title>The transcriptional landscape of the mammalian genome.</title>
        <authorList>
            <person name="Carninci P."/>
            <person name="Kasukawa T."/>
            <person name="Katayama S."/>
            <person name="Gough J."/>
            <person name="Frith M.C."/>
            <person name="Maeda N."/>
            <person name="Oyama R."/>
            <person name="Ravasi T."/>
            <person name="Lenhard B."/>
            <person name="Wells C."/>
            <person name="Kodzius R."/>
            <person name="Shimokawa K."/>
            <person name="Bajic V.B."/>
            <person name="Brenner S.E."/>
            <person name="Batalov S."/>
            <person name="Forrest A.R."/>
            <person name="Zavolan M."/>
            <person name="Davis M.J."/>
            <person name="Wilming L.G."/>
            <person name="Aidinis V."/>
            <person name="Allen J.E."/>
            <person name="Ambesi-Impiombato A."/>
            <person name="Apweiler R."/>
            <person name="Aturaliya R.N."/>
            <person name="Bailey T.L."/>
            <person name="Bansal M."/>
            <person name="Baxter L."/>
            <person name="Beisel K.W."/>
            <person name="Bersano T."/>
            <person name="Bono H."/>
            <person name="Chalk A.M."/>
            <person name="Chiu K.P."/>
            <person name="Choudhary V."/>
            <person name="Christoffels A."/>
            <person name="Clutterbuck D.R."/>
            <person name="Crowe M.L."/>
            <person name="Dalla E."/>
            <person name="Dalrymple B.P."/>
            <person name="de Bono B."/>
            <person name="Della Gatta G."/>
            <person name="di Bernardo D."/>
            <person name="Down T."/>
            <person name="Engstrom P."/>
            <person name="Fagiolini M."/>
            <person name="Faulkner G."/>
            <person name="Fletcher C.F."/>
            <person name="Fukushima T."/>
            <person name="Furuno M."/>
            <person name="Futaki S."/>
            <person name="Gariboldi M."/>
            <person name="Georgii-Hemming P."/>
            <person name="Gingeras T.R."/>
            <person name="Gojobori T."/>
            <person name="Green R.E."/>
            <person name="Gustincich S."/>
            <person name="Harbers M."/>
            <person name="Hayashi Y."/>
            <person name="Hensch T.K."/>
            <person name="Hirokawa N."/>
            <person name="Hill D."/>
            <person name="Huminiecki L."/>
            <person name="Iacono M."/>
            <person name="Ikeo K."/>
            <person name="Iwama A."/>
            <person name="Ishikawa T."/>
            <person name="Jakt M."/>
            <person name="Kanapin A."/>
            <person name="Katoh M."/>
            <person name="Kawasawa Y."/>
            <person name="Kelso J."/>
            <person name="Kitamura H."/>
            <person name="Kitano H."/>
            <person name="Kollias G."/>
            <person name="Krishnan S.P."/>
            <person name="Kruger A."/>
            <person name="Kummerfeld S.K."/>
            <person name="Kurochkin I.V."/>
            <person name="Lareau L.F."/>
            <person name="Lazarevic D."/>
            <person name="Lipovich L."/>
            <person name="Liu J."/>
            <person name="Liuni S."/>
            <person name="McWilliam S."/>
            <person name="Madan Babu M."/>
            <person name="Madera M."/>
            <person name="Marchionni L."/>
            <person name="Matsuda H."/>
            <person name="Matsuzawa S."/>
            <person name="Miki H."/>
            <person name="Mignone F."/>
            <person name="Miyake S."/>
            <person name="Morris K."/>
            <person name="Mottagui-Tabar S."/>
            <person name="Mulder N."/>
            <person name="Nakano N."/>
            <person name="Nakauchi H."/>
            <person name="Ng P."/>
            <person name="Nilsson R."/>
            <person name="Nishiguchi S."/>
            <person name="Nishikawa S."/>
            <person name="Nori F."/>
            <person name="Ohara O."/>
            <person name="Okazaki Y."/>
            <person name="Orlando V."/>
            <person name="Pang K.C."/>
            <person name="Pavan W.J."/>
            <person name="Pavesi G."/>
            <person name="Pesole G."/>
            <person name="Petrovsky N."/>
            <person name="Piazza S."/>
            <person name="Reed J."/>
            <person name="Reid J.F."/>
            <person name="Ring B.Z."/>
            <person name="Ringwald M."/>
            <person name="Rost B."/>
            <person name="Ruan Y."/>
            <person name="Salzberg S.L."/>
            <person name="Sandelin A."/>
            <person name="Schneider C."/>
            <person name="Schoenbach C."/>
            <person name="Sekiguchi K."/>
            <person name="Semple C.A."/>
            <person name="Seno S."/>
            <person name="Sessa L."/>
            <person name="Sheng Y."/>
            <person name="Shibata Y."/>
            <person name="Shimada H."/>
            <person name="Shimada K."/>
            <person name="Silva D."/>
            <person name="Sinclair B."/>
            <person name="Sperling S."/>
            <person name="Stupka E."/>
            <person name="Sugiura K."/>
            <person name="Sultana R."/>
            <person name="Takenaka Y."/>
            <person name="Taki K."/>
            <person name="Tammoja K."/>
            <person name="Tan S.L."/>
            <person name="Tang S."/>
            <person name="Taylor M.S."/>
            <person name="Tegner J."/>
            <person name="Teichmann S.A."/>
            <person name="Ueda H.R."/>
            <person name="van Nimwegen E."/>
            <person name="Verardo R."/>
            <person name="Wei C.L."/>
            <person name="Yagi K."/>
            <person name="Yamanishi H."/>
            <person name="Zabarovsky E."/>
            <person name="Zhu S."/>
            <person name="Zimmer A."/>
            <person name="Hide W."/>
            <person name="Bult C."/>
            <person name="Grimmond S.M."/>
            <person name="Teasdale R.D."/>
            <person name="Liu E.T."/>
            <person name="Brusic V."/>
            <person name="Quackenbush J."/>
            <person name="Wahlestedt C."/>
            <person name="Mattick J.S."/>
            <person name="Hume D.A."/>
            <person name="Kai C."/>
            <person name="Sasaki D."/>
            <person name="Tomaru Y."/>
            <person name="Fukuda S."/>
            <person name="Kanamori-Katayama M."/>
            <person name="Suzuki M."/>
            <person name="Aoki J."/>
            <person name="Arakawa T."/>
            <person name="Iida J."/>
            <person name="Imamura K."/>
            <person name="Itoh M."/>
            <person name="Kato T."/>
            <person name="Kawaji H."/>
            <person name="Kawagashira N."/>
            <person name="Kawashima T."/>
            <person name="Kojima M."/>
            <person name="Kondo S."/>
            <person name="Konno H."/>
            <person name="Nakano K."/>
            <person name="Ninomiya N."/>
            <person name="Nishio T."/>
            <person name="Okada M."/>
            <person name="Plessy C."/>
            <person name="Shibata K."/>
            <person name="Shiraki T."/>
            <person name="Suzuki S."/>
            <person name="Tagami M."/>
            <person name="Waki K."/>
            <person name="Watahiki A."/>
            <person name="Okamura-Oho Y."/>
            <person name="Suzuki H."/>
            <person name="Kawai J."/>
            <person name="Hayashizaki Y."/>
        </authorList>
    </citation>
    <scope>NUCLEOTIDE SEQUENCE [LARGE SCALE MRNA] (ISOFORMS 1 AND 2)</scope>
    <source>
        <strain>C57BL/6J</strain>
        <tissue>Embryo</tissue>
        <tissue>Pancreas</tissue>
        <tissue>Testis</tissue>
        <tissue>Tongue</tissue>
    </source>
</reference>
<reference key="2">
    <citation type="journal article" date="2004" name="Genome Res.">
        <title>The status, quality, and expansion of the NIH full-length cDNA project: the Mammalian Gene Collection (MGC).</title>
        <authorList>
            <consortium name="The MGC Project Team"/>
        </authorList>
    </citation>
    <scope>NUCLEOTIDE SEQUENCE [LARGE SCALE MRNA] (ISOFORM 3)</scope>
    <source>
        <strain>C57BL/6J</strain>
        <tissue>Brain</tissue>
    </source>
</reference>
<reference key="3">
    <citation type="journal article" date="2009" name="Immunity">
        <title>The phagosomal proteome in interferon-gamma-activated macrophages.</title>
        <authorList>
            <person name="Trost M."/>
            <person name="English L."/>
            <person name="Lemieux S."/>
            <person name="Courcelles M."/>
            <person name="Desjardins M."/>
            <person name="Thibault P."/>
        </authorList>
    </citation>
    <scope>PHOSPHORYLATION [LARGE SCALE ANALYSIS] AT SER-118</scope>
    <scope>IDENTIFICATION BY MASS SPECTROMETRY [LARGE SCALE ANALYSIS]</scope>
</reference>
<reference key="4">
    <citation type="journal article" date="2010" name="Cell">
        <title>A tissue-specific atlas of mouse protein phosphorylation and expression.</title>
        <authorList>
            <person name="Huttlin E.L."/>
            <person name="Jedrychowski M.P."/>
            <person name="Elias J.E."/>
            <person name="Goswami T."/>
            <person name="Rad R."/>
            <person name="Beausoleil S.A."/>
            <person name="Villen J."/>
            <person name="Haas W."/>
            <person name="Sowa M.E."/>
            <person name="Gygi S.P."/>
        </authorList>
    </citation>
    <scope>PHOSPHORYLATION [LARGE SCALE ANALYSIS] AT SER-118</scope>
    <scope>IDENTIFICATION BY MASS SPECTROMETRY [LARGE SCALE ANALYSIS]</scope>
    <source>
        <tissue>Brain</tissue>
        <tissue>Brown adipose tissue</tissue>
        <tissue>Kidney</tissue>
        <tissue>Lung</tissue>
        <tissue>Spleen</tissue>
        <tissue>Testis</tissue>
    </source>
</reference>
<protein>
    <recommendedName>
        <fullName>Inhibitor of growth protein 5</fullName>
    </recommendedName>
</protein>
<sequence>MATAMYLEHYLDSIENLPCELQRNFQLMRELDQRTEDKKAEIDILAAEYISTVKTLSSAQRVEHLQKIQSAYSKCKEYSDDKVQLAMQTYEMVDKHIRRLDADLARFEADLKDRMDGSDFESTGARSLKKGRSQKEKRSSRGRGRRTSEEDTPKKKKHKSGSEFTDSILSVHPSDVLDMPVDPNEPTYCLCHQVSYGEMIGCDNPDCPIEWFHFACVDLTTKPKGKWFCPRCVQEKRKKK</sequence>
<evidence type="ECO:0000250" key="1">
    <source>
        <dbReference type="UniProtKB" id="Q8WYH8"/>
    </source>
</evidence>
<evidence type="ECO:0000255" key="2">
    <source>
        <dbReference type="PROSITE-ProRule" id="PRU00146"/>
    </source>
</evidence>
<evidence type="ECO:0000256" key="3">
    <source>
        <dbReference type="SAM" id="MobiDB-lite"/>
    </source>
</evidence>
<evidence type="ECO:0000303" key="4">
    <source>
    </source>
</evidence>
<evidence type="ECO:0000303" key="5">
    <source>
    </source>
</evidence>
<evidence type="ECO:0000305" key="6"/>
<evidence type="ECO:0007744" key="7">
    <source>
    </source>
</evidence>
<evidence type="ECO:0007744" key="8">
    <source>
    </source>
</evidence>
<gene>
    <name type="primary">Ing5</name>
</gene>
<keyword id="KW-0010">Activator</keyword>
<keyword id="KW-0025">Alternative splicing</keyword>
<keyword id="KW-0156">Chromatin regulator</keyword>
<keyword id="KW-0158">Chromosome</keyword>
<keyword id="KW-0479">Metal-binding</keyword>
<keyword id="KW-0488">Methylation</keyword>
<keyword id="KW-0539">Nucleus</keyword>
<keyword id="KW-0597">Phosphoprotein</keyword>
<keyword id="KW-1185">Reference proteome</keyword>
<keyword id="KW-0804">Transcription</keyword>
<keyword id="KW-0805">Transcription regulation</keyword>
<keyword id="KW-0862">Zinc</keyword>
<keyword id="KW-0863">Zinc-finger</keyword>
<organism>
    <name type="scientific">Mus musculus</name>
    <name type="common">Mouse</name>
    <dbReference type="NCBI Taxonomy" id="10090"/>
    <lineage>
        <taxon>Eukaryota</taxon>
        <taxon>Metazoa</taxon>
        <taxon>Chordata</taxon>
        <taxon>Craniata</taxon>
        <taxon>Vertebrata</taxon>
        <taxon>Euteleostomi</taxon>
        <taxon>Mammalia</taxon>
        <taxon>Eutheria</taxon>
        <taxon>Euarchontoglires</taxon>
        <taxon>Glires</taxon>
        <taxon>Rodentia</taxon>
        <taxon>Myomorpha</taxon>
        <taxon>Muroidea</taxon>
        <taxon>Muridae</taxon>
        <taxon>Murinae</taxon>
        <taxon>Mus</taxon>
        <taxon>Mus</taxon>
    </lineage>
</organism>
<feature type="chain" id="PRO_0000212672" description="Inhibitor of growth protein 5">
    <location>
        <begin position="1"/>
        <end position="240"/>
    </location>
</feature>
<feature type="zinc finger region" description="PHD-type" evidence="2">
    <location>
        <begin position="186"/>
        <end position="235"/>
    </location>
</feature>
<feature type="region of interest" description="Disordered" evidence="3">
    <location>
        <begin position="115"/>
        <end position="165"/>
    </location>
</feature>
<feature type="binding site" evidence="1">
    <location>
        <position position="189"/>
    </location>
    <ligand>
        <name>Zn(2+)</name>
        <dbReference type="ChEBI" id="CHEBI:29105"/>
        <label>1</label>
    </ligand>
</feature>
<feature type="binding site" evidence="1">
    <location>
        <position position="191"/>
    </location>
    <ligand>
        <name>Zn(2+)</name>
        <dbReference type="ChEBI" id="CHEBI:29105"/>
        <label>1</label>
    </ligand>
</feature>
<feature type="binding site" evidence="1">
    <location>
        <position position="202"/>
    </location>
    <ligand>
        <name>Zn(2+)</name>
        <dbReference type="ChEBI" id="CHEBI:29105"/>
        <label>2</label>
    </ligand>
</feature>
<feature type="binding site" evidence="1">
    <location>
        <position position="207"/>
    </location>
    <ligand>
        <name>Zn(2+)</name>
        <dbReference type="ChEBI" id="CHEBI:29105"/>
        <label>2</label>
    </ligand>
</feature>
<feature type="binding site" evidence="1">
    <location>
        <position position="213"/>
    </location>
    <ligand>
        <name>Zn(2+)</name>
        <dbReference type="ChEBI" id="CHEBI:29105"/>
        <label>1</label>
    </ligand>
</feature>
<feature type="binding site" evidence="1">
    <location>
        <position position="216"/>
    </location>
    <ligand>
        <name>Zn(2+)</name>
        <dbReference type="ChEBI" id="CHEBI:29105"/>
        <label>1</label>
    </ligand>
</feature>
<feature type="binding site" evidence="1">
    <location>
        <position position="229"/>
    </location>
    <ligand>
        <name>Zn(2+)</name>
        <dbReference type="ChEBI" id="CHEBI:29105"/>
        <label>2</label>
    </ligand>
</feature>
<feature type="binding site" evidence="1">
    <location>
        <position position="232"/>
    </location>
    <ligand>
        <name>Zn(2+)</name>
        <dbReference type="ChEBI" id="CHEBI:29105"/>
        <label>2</label>
    </ligand>
</feature>
<feature type="site" description="Histone H3K4me3 binding" evidence="1">
    <location>
        <position position="188"/>
    </location>
</feature>
<feature type="site" description="Histone H3K4me3 binding" evidence="1">
    <location>
        <position position="199"/>
    </location>
</feature>
<feature type="site" description="Histone H3K4me3 binding" evidence="1">
    <location>
        <position position="203"/>
    </location>
</feature>
<feature type="site" description="Histone H3K4me3 binding" evidence="1">
    <location>
        <position position="211"/>
    </location>
</feature>
<feature type="modified residue" description="Phosphoserine" evidence="7 8">
    <location>
        <position position="118"/>
    </location>
</feature>
<feature type="modified residue" description="Omega-N-methylarginine" evidence="1">
    <location>
        <position position="126"/>
    </location>
</feature>
<feature type="splice variant" id="VSP_012530" description="In isoform 3." evidence="4">
    <location>
        <begin position="1"/>
        <end position="86"/>
    </location>
</feature>
<feature type="splice variant" id="VSP_012529" description="In isoform 2." evidence="5">
    <location>
        <begin position="1"/>
        <end position="27"/>
    </location>
</feature>
<accession>Q9D8Y8</accession>
<accession>Q3UL57</accession>
<accession>Q6P292</accession>
<accession>Q9CV64</accession>
<accession>Q9D9V8</accession>
<dbReference type="EMBL" id="AK006421">
    <property type="protein sequence ID" value="BAB24580.1"/>
    <property type="molecule type" value="mRNA"/>
</dbReference>
<dbReference type="EMBL" id="AK007536">
    <property type="protein sequence ID" value="BAB25095.1"/>
    <property type="molecule type" value="mRNA"/>
</dbReference>
<dbReference type="EMBL" id="AK009312">
    <property type="protein sequence ID" value="BAB26210.1"/>
    <property type="molecule type" value="mRNA"/>
</dbReference>
<dbReference type="EMBL" id="AK028010">
    <property type="protein sequence ID" value="BAC25697.1"/>
    <property type="molecule type" value="mRNA"/>
</dbReference>
<dbReference type="EMBL" id="AK145695">
    <property type="protein sequence ID" value="BAE26593.1"/>
    <property type="molecule type" value="mRNA"/>
</dbReference>
<dbReference type="EMBL" id="BC064674">
    <property type="protein sequence ID" value="AAH64674.1"/>
    <property type="molecule type" value="mRNA"/>
</dbReference>
<dbReference type="CCDS" id="CCDS35673.1">
    <molecule id="Q9D8Y8-1"/>
</dbReference>
<dbReference type="RefSeq" id="NP_079730.1">
    <molecule id="Q9D8Y8-1"/>
    <property type="nucleotide sequence ID" value="NM_025454.2"/>
</dbReference>
<dbReference type="SMR" id="Q9D8Y8"/>
<dbReference type="BioGRID" id="211337">
    <property type="interactions" value="4"/>
</dbReference>
<dbReference type="ComplexPortal" id="CPX-797">
    <property type="entry name" value="HBO1-5.1 histone acetyltransferase complex"/>
</dbReference>
<dbReference type="ComplexPortal" id="CPX-798">
    <property type="entry name" value="HBO1-5.2 histone acetyltransferase complex"/>
</dbReference>
<dbReference type="ComplexPortal" id="CPX-799">
    <property type="entry name" value="HBO1-5.3 histone acetyltransferase complex"/>
</dbReference>
<dbReference type="ComplexPortal" id="CPX-800">
    <property type="entry name" value="MOZ1 histone acetyltransferase complex"/>
</dbReference>
<dbReference type="ComplexPortal" id="CPX-801">
    <property type="entry name" value="MOZ2 histone acetyltransferase complex"/>
</dbReference>
<dbReference type="ComplexPortal" id="CPX-802">
    <property type="entry name" value="MOZ3 histone acetyltransferase complex"/>
</dbReference>
<dbReference type="ComplexPortal" id="CPX-803">
    <property type="entry name" value="MORF1 histone acetyltransferase complex"/>
</dbReference>
<dbReference type="ComplexPortal" id="CPX-804">
    <property type="entry name" value="MORF3 histone acetyltransferase complex"/>
</dbReference>
<dbReference type="ComplexPortal" id="CPX-805">
    <property type="entry name" value="MORF2 histone acetyltransferase complex"/>
</dbReference>
<dbReference type="FunCoup" id="Q9D8Y8">
    <property type="interactions" value="3029"/>
</dbReference>
<dbReference type="STRING" id="10090.ENSMUSP00000027505"/>
<dbReference type="iPTMnet" id="Q9D8Y8"/>
<dbReference type="PhosphoSitePlus" id="Q9D8Y8"/>
<dbReference type="jPOST" id="Q9D8Y8"/>
<dbReference type="PaxDb" id="10090-ENSMUSP00000027505"/>
<dbReference type="PeptideAtlas" id="Q9D8Y8"/>
<dbReference type="ProteomicsDB" id="269482">
    <molecule id="Q9D8Y8-1"/>
</dbReference>
<dbReference type="ProteomicsDB" id="269483">
    <molecule id="Q9D8Y8-2"/>
</dbReference>
<dbReference type="ProteomicsDB" id="269484">
    <molecule id="Q9D8Y8-3"/>
</dbReference>
<dbReference type="Pumba" id="Q9D8Y8"/>
<dbReference type="Antibodypedia" id="34573">
    <property type="antibodies" value="231 antibodies from 32 providers"/>
</dbReference>
<dbReference type="DNASU" id="66262"/>
<dbReference type="Ensembl" id="ENSMUST00000027505.13">
    <molecule id="Q9D8Y8-1"/>
    <property type="protein sequence ID" value="ENSMUSP00000027505.7"/>
    <property type="gene ID" value="ENSMUSG00000026283.14"/>
</dbReference>
<dbReference type="Ensembl" id="ENSMUST00000190476.2">
    <molecule id="Q9D8Y8-2"/>
    <property type="protein sequence ID" value="ENSMUSP00000140498.2"/>
    <property type="gene ID" value="ENSMUSG00000026283.14"/>
</dbReference>
<dbReference type="GeneID" id="66262"/>
<dbReference type="KEGG" id="mmu:66262"/>
<dbReference type="UCSC" id="uc007cen.1">
    <molecule id="Q9D8Y8-1"/>
    <property type="organism name" value="mouse"/>
</dbReference>
<dbReference type="AGR" id="MGI:1922816"/>
<dbReference type="CTD" id="84289"/>
<dbReference type="MGI" id="MGI:1922816">
    <property type="gene designation" value="Ing5"/>
</dbReference>
<dbReference type="VEuPathDB" id="HostDB:ENSMUSG00000026283"/>
<dbReference type="eggNOG" id="KOG1973">
    <property type="taxonomic scope" value="Eukaryota"/>
</dbReference>
<dbReference type="GeneTree" id="ENSGT00940000158159"/>
<dbReference type="HOGENOM" id="CLU_031900_5_1_1"/>
<dbReference type="InParanoid" id="Q9D8Y8"/>
<dbReference type="OMA" id="QPKGKWF"/>
<dbReference type="OrthoDB" id="5411773at2759"/>
<dbReference type="PhylomeDB" id="Q9D8Y8"/>
<dbReference type="TreeFam" id="TF352014"/>
<dbReference type="Reactome" id="R-MMU-3214847">
    <property type="pathway name" value="HATs acetylate histones"/>
</dbReference>
<dbReference type="Reactome" id="R-MMU-6804758">
    <property type="pathway name" value="Regulation of TP53 Activity through Acetylation"/>
</dbReference>
<dbReference type="BioGRID-ORCS" id="66262">
    <property type="hits" value="5 hits in 81 CRISPR screens"/>
</dbReference>
<dbReference type="PRO" id="PR:Q9D8Y8"/>
<dbReference type="Proteomes" id="UP000000589">
    <property type="component" value="Chromosome 1"/>
</dbReference>
<dbReference type="RNAct" id="Q9D8Y8">
    <property type="molecule type" value="protein"/>
</dbReference>
<dbReference type="Bgee" id="ENSMUSG00000026283">
    <property type="expression patterns" value="Expressed in metanephric ureteric bud and 225 other cell types or tissues"/>
</dbReference>
<dbReference type="ExpressionAtlas" id="Q9D8Y8">
    <property type="expression patterns" value="baseline and differential"/>
</dbReference>
<dbReference type="GO" id="GO:0000123">
    <property type="term" value="C:histone acetyltransferase complex"/>
    <property type="evidence" value="ECO:0000250"/>
    <property type="project" value="UniProtKB"/>
</dbReference>
<dbReference type="GO" id="GO:0070776">
    <property type="term" value="C:MOZ/MORF histone acetyltransferase complex"/>
    <property type="evidence" value="ECO:0000250"/>
    <property type="project" value="UniProtKB"/>
</dbReference>
<dbReference type="GO" id="GO:0005654">
    <property type="term" value="C:nucleoplasm"/>
    <property type="evidence" value="ECO:0000266"/>
    <property type="project" value="ComplexPortal"/>
</dbReference>
<dbReference type="GO" id="GO:0005634">
    <property type="term" value="C:nucleus"/>
    <property type="evidence" value="ECO:0000250"/>
    <property type="project" value="UniProtKB"/>
</dbReference>
<dbReference type="GO" id="GO:0003682">
    <property type="term" value="F:chromatin binding"/>
    <property type="evidence" value="ECO:0000314"/>
    <property type="project" value="MGI"/>
</dbReference>
<dbReference type="GO" id="GO:0140002">
    <property type="term" value="F:histone H3K4me3 reader activity"/>
    <property type="evidence" value="ECO:0007669"/>
    <property type="project" value="Ensembl"/>
</dbReference>
<dbReference type="GO" id="GO:0008270">
    <property type="term" value="F:zinc ion binding"/>
    <property type="evidence" value="ECO:0007669"/>
    <property type="project" value="UniProtKB-KW"/>
</dbReference>
<dbReference type="GO" id="GO:0097190">
    <property type="term" value="P:apoptotic signaling pathway"/>
    <property type="evidence" value="ECO:0000316"/>
    <property type="project" value="MGI"/>
</dbReference>
<dbReference type="GO" id="GO:0140889">
    <property type="term" value="P:DNA replication-dependent chromatin disassembly"/>
    <property type="evidence" value="ECO:0000250"/>
    <property type="project" value="UniProtKB"/>
</dbReference>
<dbReference type="GO" id="GO:0048144">
    <property type="term" value="P:fibroblast proliferation"/>
    <property type="evidence" value="ECO:0000316"/>
    <property type="project" value="MGI"/>
</dbReference>
<dbReference type="GO" id="GO:0008285">
    <property type="term" value="P:negative regulation of cell population proliferation"/>
    <property type="evidence" value="ECO:0000266"/>
    <property type="project" value="MGI"/>
</dbReference>
<dbReference type="GO" id="GO:0048147">
    <property type="term" value="P:negative regulation of fibroblast proliferation"/>
    <property type="evidence" value="ECO:0000316"/>
    <property type="project" value="MGI"/>
</dbReference>
<dbReference type="GO" id="GO:0045926">
    <property type="term" value="P:negative regulation of growth"/>
    <property type="evidence" value="ECO:0007669"/>
    <property type="project" value="Ensembl"/>
</dbReference>
<dbReference type="GO" id="GO:0043065">
    <property type="term" value="P:positive regulation of apoptotic process"/>
    <property type="evidence" value="ECO:0000266"/>
    <property type="project" value="MGI"/>
</dbReference>
<dbReference type="GO" id="GO:2001235">
    <property type="term" value="P:positive regulation of apoptotic signaling pathway"/>
    <property type="evidence" value="ECO:0000316"/>
    <property type="project" value="MGI"/>
</dbReference>
<dbReference type="GO" id="GO:0051726">
    <property type="term" value="P:regulation of cell cycle"/>
    <property type="evidence" value="ECO:0000266"/>
    <property type="project" value="ComplexPortal"/>
</dbReference>
<dbReference type="GO" id="GO:0001558">
    <property type="term" value="P:regulation of cell growth"/>
    <property type="evidence" value="ECO:0000266"/>
    <property type="project" value="ComplexPortal"/>
</dbReference>
<dbReference type="GO" id="GO:0050793">
    <property type="term" value="P:regulation of developmental process"/>
    <property type="evidence" value="ECO:0000303"/>
    <property type="project" value="ComplexPortal"/>
</dbReference>
<dbReference type="GO" id="GO:2000278">
    <property type="term" value="P:regulation of DNA biosynthetic process"/>
    <property type="evidence" value="ECO:0000266"/>
    <property type="project" value="ComplexPortal"/>
</dbReference>
<dbReference type="GO" id="GO:0006275">
    <property type="term" value="P:regulation of DNA replication"/>
    <property type="evidence" value="ECO:0000266"/>
    <property type="project" value="ComplexPortal"/>
</dbReference>
<dbReference type="GO" id="GO:0006355">
    <property type="term" value="P:regulation of DNA-templated transcription"/>
    <property type="evidence" value="ECO:0000266"/>
    <property type="project" value="ComplexPortal"/>
</dbReference>
<dbReference type="GO" id="GO:1903706">
    <property type="term" value="P:regulation of hemopoiesis"/>
    <property type="evidence" value="ECO:0000303"/>
    <property type="project" value="ComplexPortal"/>
</dbReference>
<dbReference type="CDD" id="cd16863">
    <property type="entry name" value="ING_ING5"/>
    <property type="match status" value="1"/>
</dbReference>
<dbReference type="CDD" id="cd15685">
    <property type="entry name" value="PHD_ING5"/>
    <property type="match status" value="1"/>
</dbReference>
<dbReference type="FunFam" id="3.30.40.10:FF:000016">
    <property type="entry name" value="Inhibitor of growth protein"/>
    <property type="match status" value="1"/>
</dbReference>
<dbReference type="Gene3D" id="6.10.140.1740">
    <property type="match status" value="1"/>
</dbReference>
<dbReference type="Gene3D" id="3.30.40.10">
    <property type="entry name" value="Zinc/RING finger domain, C3HC4 (zinc finger)"/>
    <property type="match status" value="1"/>
</dbReference>
<dbReference type="InterPro" id="IPR028651">
    <property type="entry name" value="ING_fam"/>
</dbReference>
<dbReference type="InterPro" id="IPR024610">
    <property type="entry name" value="ING_N_histone-binding"/>
</dbReference>
<dbReference type="InterPro" id="IPR019786">
    <property type="entry name" value="Zinc_finger_PHD-type_CS"/>
</dbReference>
<dbReference type="InterPro" id="IPR011011">
    <property type="entry name" value="Znf_FYVE_PHD"/>
</dbReference>
<dbReference type="InterPro" id="IPR001965">
    <property type="entry name" value="Znf_PHD"/>
</dbReference>
<dbReference type="InterPro" id="IPR019787">
    <property type="entry name" value="Znf_PHD-finger"/>
</dbReference>
<dbReference type="InterPro" id="IPR013083">
    <property type="entry name" value="Znf_RING/FYVE/PHD"/>
</dbReference>
<dbReference type="PANTHER" id="PTHR10333">
    <property type="entry name" value="INHIBITOR OF GROWTH PROTEIN"/>
    <property type="match status" value="1"/>
</dbReference>
<dbReference type="PANTHER" id="PTHR10333:SF41">
    <property type="entry name" value="INHIBITOR OF GROWTH PROTEIN 5"/>
    <property type="match status" value="1"/>
</dbReference>
<dbReference type="Pfam" id="PF12998">
    <property type="entry name" value="ING"/>
    <property type="match status" value="1"/>
</dbReference>
<dbReference type="SMART" id="SM01408">
    <property type="entry name" value="ING"/>
    <property type="match status" value="1"/>
</dbReference>
<dbReference type="SMART" id="SM00249">
    <property type="entry name" value="PHD"/>
    <property type="match status" value="1"/>
</dbReference>
<dbReference type="SUPFAM" id="SSF57903">
    <property type="entry name" value="FYVE/PHD zinc finger"/>
    <property type="match status" value="1"/>
</dbReference>
<dbReference type="PROSITE" id="PS01359">
    <property type="entry name" value="ZF_PHD_1"/>
    <property type="match status" value="1"/>
</dbReference>
<dbReference type="PROSITE" id="PS50016">
    <property type="entry name" value="ZF_PHD_2"/>
    <property type="match status" value="1"/>
</dbReference>
<name>ING5_MOUSE</name>
<comment type="function">
    <text evidence="1">Component of the HBO1 complex, which specifically mediates acetylation of histone H3 at 'Lys-14' (H3K14ac) and, to a lower extent, acetylation of histone H4. Component of the MOZ/MORF complex which has a histone H3 acetyltransferase activity. Through chromatin acetylation it may regulate DNA replication and may function as a transcriptional coactivator. Inhibits cell growth, induces a delay in S-phase progression and enhances Fas-induced apoptosis in an INCA1-dependent manner.</text>
</comment>
<comment type="subunit">
    <text evidence="1">Component of the HBO1 complex composed of KAT7/HBO1, MEAF6, ING5, and one scaffold subunit: complexes containing BRPF scaffold (BRPF1, BRD1/BRPF2 or BRPF3) direct KAT7/HBO1 specificity towards H3K14ac, while complexes containing JADE scaffold (JADE1, JADE2 and JADE3) mediate acetylation of histone H4. Component of the MOZ/MORF complex composed at least of ING5, KAT6A, KAT6B, MEAF6 and one of BRPF1, BRD1/BRPF2 and BRPF3. Interacts with H3K4me3 and to a lesser extent with H3K4me2. Interacts with EP300 and p53/TP53. Interacts with INCA1.</text>
</comment>
<comment type="subcellular location">
    <subcellularLocation>
        <location evidence="1">Nucleus</location>
    </subcellularLocation>
    <subcellularLocation>
        <location evidence="1">Chromosome</location>
    </subcellularLocation>
    <text evidence="1">Localizes to transcription start sites.</text>
</comment>
<comment type="alternative products">
    <event type="alternative splicing"/>
    <isoform>
        <id>Q9D8Y8-1</id>
        <name>1</name>
        <sequence type="displayed"/>
    </isoform>
    <isoform>
        <id>Q9D8Y8-2</id>
        <name>2</name>
        <sequence type="described" ref="VSP_012529"/>
    </isoform>
    <isoform>
        <id>Q9D8Y8-3</id>
        <name>3</name>
        <sequence type="described" ref="VSP_012530"/>
    </isoform>
</comment>
<comment type="domain">
    <text evidence="1">The PHD-type zinc finger mediates the binding to H3K4me3.</text>
</comment>
<comment type="miscellaneous">
    <molecule>Isoform 3</molecule>
    <text evidence="6">May be due to a competing acceptor splice site.</text>
</comment>
<comment type="similarity">
    <text evidence="6">Belongs to the ING family.</text>
</comment>